<organism>
    <name type="scientific">Drosophila melanogaster</name>
    <name type="common">Fruit fly</name>
    <dbReference type="NCBI Taxonomy" id="7227"/>
    <lineage>
        <taxon>Eukaryota</taxon>
        <taxon>Metazoa</taxon>
        <taxon>Ecdysozoa</taxon>
        <taxon>Arthropoda</taxon>
        <taxon>Hexapoda</taxon>
        <taxon>Insecta</taxon>
        <taxon>Pterygota</taxon>
        <taxon>Neoptera</taxon>
        <taxon>Endopterygota</taxon>
        <taxon>Diptera</taxon>
        <taxon>Brachycera</taxon>
        <taxon>Muscomorpha</taxon>
        <taxon>Ephydroidea</taxon>
        <taxon>Drosophilidae</taxon>
        <taxon>Drosophila</taxon>
        <taxon>Sophophora</taxon>
    </lineage>
</organism>
<comment type="function">
    <text evidence="5 6 7">Plays a role in neuronal membrane excitation, important for normal response properties of the photoreceptor. Able to control excitability from either neurons or glia cells. Ine negatively regulates neuronal sodium channels. Controls neurotransmitter-mediated signaling pathways associated with the structure of the larval peripheral nerve, ine and eag control perineurial glial growth through partially redundant pathways. Isoform A and isoform B are both functional, although isoform A functions with greater efficiency. Has a role in osmolyte transport within the Malpighian tubule and hindgut.</text>
</comment>
<comment type="subcellular location">
    <subcellularLocation>
        <location evidence="1">Membrane</location>
        <topology evidence="1">Multi-pass membrane protein</topology>
    </subcellularLocation>
</comment>
<comment type="alternative products">
    <event type="alternative splicing"/>
    <isoform>
        <id>Q9VR07-1</id>
        <name evidence="4">A</name>
        <name>C</name>
        <name>D</name>
        <name>P1</name>
        <sequence type="displayed"/>
    </isoform>
    <isoform>
        <id>Q9VR07-2</id>
        <name evidence="9 11">B</name>
        <name>P2</name>
        <sequence type="described" ref="VSP_052087 VSP_052088"/>
    </isoform>
</comment>
<comment type="tissue specificity">
    <text evidence="4 6 7 11">Expressed both maternally and zygotically. Developing embryos exhibit expression in the posterior hindgut, foregut, midgut, Malpighian tubules, anal plate, Garland cells, and a subset of cells in the central nervous system. Central nervous system expression is seen in segmentally repeating in cells flanking the midline of the ventral ganglion. Isoform A and isoform B are colocalized in both the nervous system and the fluid reabsorption system.</text>
</comment>
<comment type="disruption phenotype">
    <text evidence="9">Flies lacking this protein, in a wild-type background, display no observable behavioral defects. In a Shaker mutant background, flies lacking ine exhibit downturned wings and an indented thorax. Flies lacking ine exhibit increased excitability of the larval peripheral nerve by causing the defective re-uptake of the substrate neurotransmitter of the ine transporter and thus overstimulation by this neurotransmitter. Flies lacking ine increase the growth of the perineurial glial layer of the larval peripheral nerve. Flies overexpressing ine exhibit delayed onset of long-term facilitation and increased failure rate of transmitter release at the larval neuromuscular junction, reduced amplitude of larval nerve compound action potentials, suppression of the leg-shaking behavior of mutants defective in the Shaker-encoded potassium channel, and temperature-sensitive paralysis.</text>
</comment>
<comment type="miscellaneous">
    <molecule>Isoform A</molecule>
    <text>The long N terminus is uncommon among members of the sodium- and chloride-dependent neurotransmitter transporter family but is required for efficient transporter activity.</text>
</comment>
<comment type="similarity">
    <text evidence="14">Belongs to the sodium:neurotransmitter symporter (SNF) (TC 2.A.22) family.</text>
</comment>
<reference evidence="14 15" key="1">
    <citation type="journal article" date="1992" name="J. Neurogenet.">
        <title>Identification and characterization of inebriated, a gene affecting neuronal excitability in Drosophila.</title>
        <authorList>
            <person name="Stern M."/>
            <person name="Ganetzky B."/>
        </authorList>
    </citation>
    <scope>NUCLEOTIDE SEQUENCE [MRNA] (ISOFORM B)</scope>
    <scope>PUTATIVE FUNCTION</scope>
    <scope>DISRUPTION PHENOTYPE</scope>
    <source>
        <strain evidence="15">Canton-S</strain>
        <tissue evidence="9">Embryo</tissue>
    </source>
</reference>
<reference evidence="14 19" key="2">
    <citation type="journal article" date="1996" name="J. Neurogenet.">
        <title>Drosophila rosA gene, which when mutant causes aberrant photoreceptor oscillation, encodes a novel neurotransmitter transporter homologue.</title>
        <authorList>
            <person name="Burg M.G."/>
            <person name="Geng C."/>
            <person name="Guan Y."/>
            <person name="Koliantz G."/>
            <person name="Pak W.L."/>
        </authorList>
    </citation>
    <scope>NUCLEOTIDE SEQUENCE [MRNA] (ISOFORM A)</scope>
    <scope>PUTATIVE FUNCTION</scope>
    <scope>TISSUE SPECIFICITY</scope>
    <source>
        <strain evidence="19">Canton-S</strain>
        <tissue evidence="19">Head</tissue>
    </source>
</reference>
<reference evidence="14 15" key="3">
    <citation type="journal article" date="1996" name="Proc. Natl. Acad. Sci. U.S.A.">
        <title>A neurotransmitter transporter encoded by the Drosophila inebriated gene.</title>
        <authorList>
            <person name="Soehnge H."/>
            <person name="Huang X."/>
            <person name="Becker M."/>
            <person name="Whitley P."/>
            <person name="Conover D."/>
            <person name="Stern M."/>
        </authorList>
    </citation>
    <scope>NUCLEOTIDE SEQUENCE [MRNA] (ISOFORM B)</scope>
    <scope>PUTATIVE FUNCTION</scope>
    <scope>TISSUE SPECIFICITY</scope>
    <source>
        <strain evidence="15">Canton-S</strain>
        <tissue evidence="11">Embryo</tissue>
    </source>
</reference>
<reference evidence="16" key="4">
    <citation type="journal article" date="2000" name="Science">
        <title>The genome sequence of Drosophila melanogaster.</title>
        <authorList>
            <person name="Adams M.D."/>
            <person name="Celniker S.E."/>
            <person name="Holt R.A."/>
            <person name="Evans C.A."/>
            <person name="Gocayne J.D."/>
            <person name="Amanatides P.G."/>
            <person name="Scherer S.E."/>
            <person name="Li P.W."/>
            <person name="Hoskins R.A."/>
            <person name="Galle R.F."/>
            <person name="George R.A."/>
            <person name="Lewis S.E."/>
            <person name="Richards S."/>
            <person name="Ashburner M."/>
            <person name="Henderson S.N."/>
            <person name="Sutton G.G."/>
            <person name="Wortman J.R."/>
            <person name="Yandell M.D."/>
            <person name="Zhang Q."/>
            <person name="Chen L.X."/>
            <person name="Brandon R.C."/>
            <person name="Rogers Y.-H.C."/>
            <person name="Blazej R.G."/>
            <person name="Champe M."/>
            <person name="Pfeiffer B.D."/>
            <person name="Wan K.H."/>
            <person name="Doyle C."/>
            <person name="Baxter E.G."/>
            <person name="Helt G."/>
            <person name="Nelson C.R."/>
            <person name="Miklos G.L.G."/>
            <person name="Abril J.F."/>
            <person name="Agbayani A."/>
            <person name="An H.-J."/>
            <person name="Andrews-Pfannkoch C."/>
            <person name="Baldwin D."/>
            <person name="Ballew R.M."/>
            <person name="Basu A."/>
            <person name="Baxendale J."/>
            <person name="Bayraktaroglu L."/>
            <person name="Beasley E.M."/>
            <person name="Beeson K.Y."/>
            <person name="Benos P.V."/>
            <person name="Berman B.P."/>
            <person name="Bhandari D."/>
            <person name="Bolshakov S."/>
            <person name="Borkova D."/>
            <person name="Botchan M.R."/>
            <person name="Bouck J."/>
            <person name="Brokstein P."/>
            <person name="Brottier P."/>
            <person name="Burtis K.C."/>
            <person name="Busam D.A."/>
            <person name="Butler H."/>
            <person name="Cadieu E."/>
            <person name="Center A."/>
            <person name="Chandra I."/>
            <person name="Cherry J.M."/>
            <person name="Cawley S."/>
            <person name="Dahlke C."/>
            <person name="Davenport L.B."/>
            <person name="Davies P."/>
            <person name="de Pablos B."/>
            <person name="Delcher A."/>
            <person name="Deng Z."/>
            <person name="Mays A.D."/>
            <person name="Dew I."/>
            <person name="Dietz S.M."/>
            <person name="Dodson K."/>
            <person name="Doup L.E."/>
            <person name="Downes M."/>
            <person name="Dugan-Rocha S."/>
            <person name="Dunkov B.C."/>
            <person name="Dunn P."/>
            <person name="Durbin K.J."/>
            <person name="Evangelista C.C."/>
            <person name="Ferraz C."/>
            <person name="Ferriera S."/>
            <person name="Fleischmann W."/>
            <person name="Fosler C."/>
            <person name="Gabrielian A.E."/>
            <person name="Garg N.S."/>
            <person name="Gelbart W.M."/>
            <person name="Glasser K."/>
            <person name="Glodek A."/>
            <person name="Gong F."/>
            <person name="Gorrell J.H."/>
            <person name="Gu Z."/>
            <person name="Guan P."/>
            <person name="Harris M."/>
            <person name="Harris N.L."/>
            <person name="Harvey D.A."/>
            <person name="Heiman T.J."/>
            <person name="Hernandez J.R."/>
            <person name="Houck J."/>
            <person name="Hostin D."/>
            <person name="Houston K.A."/>
            <person name="Howland T.J."/>
            <person name="Wei M.-H."/>
            <person name="Ibegwam C."/>
            <person name="Jalali M."/>
            <person name="Kalush F."/>
            <person name="Karpen G.H."/>
            <person name="Ke Z."/>
            <person name="Kennison J.A."/>
            <person name="Ketchum K.A."/>
            <person name="Kimmel B.E."/>
            <person name="Kodira C.D."/>
            <person name="Kraft C.L."/>
            <person name="Kravitz S."/>
            <person name="Kulp D."/>
            <person name="Lai Z."/>
            <person name="Lasko P."/>
            <person name="Lei Y."/>
            <person name="Levitsky A.A."/>
            <person name="Li J.H."/>
            <person name="Li Z."/>
            <person name="Liang Y."/>
            <person name="Lin X."/>
            <person name="Liu X."/>
            <person name="Mattei B."/>
            <person name="McIntosh T.C."/>
            <person name="McLeod M.P."/>
            <person name="McPherson D."/>
            <person name="Merkulov G."/>
            <person name="Milshina N.V."/>
            <person name="Mobarry C."/>
            <person name="Morris J."/>
            <person name="Moshrefi A."/>
            <person name="Mount S.M."/>
            <person name="Moy M."/>
            <person name="Murphy B."/>
            <person name="Murphy L."/>
            <person name="Muzny D.M."/>
            <person name="Nelson D.L."/>
            <person name="Nelson D.R."/>
            <person name="Nelson K.A."/>
            <person name="Nixon K."/>
            <person name="Nusskern D.R."/>
            <person name="Pacleb J.M."/>
            <person name="Palazzolo M."/>
            <person name="Pittman G.S."/>
            <person name="Pan S."/>
            <person name="Pollard J."/>
            <person name="Puri V."/>
            <person name="Reese M.G."/>
            <person name="Reinert K."/>
            <person name="Remington K."/>
            <person name="Saunders R.D.C."/>
            <person name="Scheeler F."/>
            <person name="Shen H."/>
            <person name="Shue B.C."/>
            <person name="Siden-Kiamos I."/>
            <person name="Simpson M."/>
            <person name="Skupski M.P."/>
            <person name="Smith T.J."/>
            <person name="Spier E."/>
            <person name="Spradling A.C."/>
            <person name="Stapleton M."/>
            <person name="Strong R."/>
            <person name="Sun E."/>
            <person name="Svirskas R."/>
            <person name="Tector C."/>
            <person name="Turner R."/>
            <person name="Venter E."/>
            <person name="Wang A.H."/>
            <person name="Wang X."/>
            <person name="Wang Z.-Y."/>
            <person name="Wassarman D.A."/>
            <person name="Weinstock G.M."/>
            <person name="Weissenbach J."/>
            <person name="Williams S.M."/>
            <person name="Woodage T."/>
            <person name="Worley K.C."/>
            <person name="Wu D."/>
            <person name="Yang S."/>
            <person name="Yao Q.A."/>
            <person name="Ye J."/>
            <person name="Yeh R.-F."/>
            <person name="Zaveri J.S."/>
            <person name="Zhan M."/>
            <person name="Zhang G."/>
            <person name="Zhao Q."/>
            <person name="Zheng L."/>
            <person name="Zheng X.H."/>
            <person name="Zhong F.N."/>
            <person name="Zhong W."/>
            <person name="Zhou X."/>
            <person name="Zhu S.C."/>
            <person name="Zhu X."/>
            <person name="Smith H.O."/>
            <person name="Gibbs R.A."/>
            <person name="Myers E.W."/>
            <person name="Rubin G.M."/>
            <person name="Venter J.C."/>
        </authorList>
    </citation>
    <scope>NUCLEOTIDE SEQUENCE [LARGE SCALE GENOMIC DNA]</scope>
    <source>
        <strain evidence="3">Berkeley</strain>
    </source>
</reference>
<reference evidence="14 16" key="5">
    <citation type="journal article" date="2002" name="Genome Biol.">
        <title>Annotation of the Drosophila melanogaster euchromatic genome: a systematic review.</title>
        <authorList>
            <person name="Misra S."/>
            <person name="Crosby M.A."/>
            <person name="Mungall C.J."/>
            <person name="Matthews B.B."/>
            <person name="Campbell K.S."/>
            <person name="Hradecky P."/>
            <person name="Huang Y."/>
            <person name="Kaminker J.S."/>
            <person name="Millburn G.H."/>
            <person name="Prochnik S.E."/>
            <person name="Smith C.D."/>
            <person name="Tupy J.L."/>
            <person name="Whitfield E.J."/>
            <person name="Bayraktaroglu L."/>
            <person name="Berman B.P."/>
            <person name="Bettencourt B.R."/>
            <person name="Celniker S.E."/>
            <person name="de Grey A.D.N.J."/>
            <person name="Drysdale R.A."/>
            <person name="Harris N.L."/>
            <person name="Richter J."/>
            <person name="Russo S."/>
            <person name="Schroeder A.J."/>
            <person name="Shu S.Q."/>
            <person name="Stapleton M."/>
            <person name="Yamada C."/>
            <person name="Ashburner M."/>
            <person name="Gelbart W.M."/>
            <person name="Rubin G.M."/>
            <person name="Lewis S.E."/>
        </authorList>
    </citation>
    <scope>GENOME REANNOTATION</scope>
    <scope>ALTERNATIVE SPLICING</scope>
    <source>
        <strain>Berkeley</strain>
    </source>
</reference>
<reference evidence="14 17" key="6">
    <citation type="journal article" date="2002" name="Genome Biol.">
        <title>A Drosophila full-length cDNA resource.</title>
        <authorList>
            <person name="Stapleton M."/>
            <person name="Carlson J.W."/>
            <person name="Brokstein P."/>
            <person name="Yu C."/>
            <person name="Champe M."/>
            <person name="George R.A."/>
            <person name="Guarin H."/>
            <person name="Kronmiller B."/>
            <person name="Pacleb J.M."/>
            <person name="Park S."/>
            <person name="Wan K.H."/>
            <person name="Rubin G.M."/>
            <person name="Celniker S.E."/>
        </authorList>
    </citation>
    <scope>NUCLEOTIDE SEQUENCE [LARGE SCALE MRNA] (ISOFORM A)</scope>
    <source>
        <strain evidence="17">Berkeley</strain>
        <tissue evidence="8">Head</tissue>
    </source>
</reference>
<reference evidence="14 18" key="7">
    <citation type="submission" date="2003-08" db="EMBL/GenBank/DDBJ databases">
        <authorList>
            <person name="Stapleton M."/>
            <person name="Brokstein P."/>
            <person name="Hong L."/>
            <person name="Agbayani A."/>
            <person name="Carlson J.W."/>
            <person name="Champe M."/>
            <person name="Chavez C."/>
            <person name="Dorsett V."/>
            <person name="Dresnek D."/>
            <person name="Farfan D."/>
            <person name="Frise E."/>
            <person name="George R.A."/>
            <person name="Gonzalez M."/>
            <person name="Guarin H."/>
            <person name="Kronmiller B."/>
            <person name="Li P.W."/>
            <person name="Liao G."/>
            <person name="Miranda A."/>
            <person name="Mungall C.J."/>
            <person name="Nunoo J."/>
            <person name="Pacleb J.M."/>
            <person name="Paragas V."/>
            <person name="Park S."/>
            <person name="Patel S."/>
            <person name="Phouanenavong S."/>
            <person name="Wan K.H."/>
            <person name="Yu C."/>
            <person name="Lewis S.E."/>
            <person name="Rubin G.M."/>
            <person name="Celniker S.E."/>
        </authorList>
    </citation>
    <scope>NUCLEOTIDE SEQUENCE [LARGE SCALE MRNA] (ISOFORM A)</scope>
    <source>
        <strain evidence="18">Berkeley</strain>
        <tissue>Head</tissue>
    </source>
</reference>
<reference evidence="14" key="8">
    <citation type="journal article" date="2001" name="Proc. Natl. Acad. Sci. U.S.A.">
        <title>Control of Drosophila perineurial glial growth by interacting neurotransmitter-mediated signaling pathways.</title>
        <authorList>
            <person name="Yager J."/>
            <person name="Richards S."/>
            <person name="Hekmat-Scafe D.S."/>
            <person name="Hurd D.D."/>
            <person name="Sundaresan V."/>
            <person name="Caprette D.R."/>
            <person name="Saxton W.M."/>
            <person name="Carlson J.R."/>
            <person name="Stern M."/>
        </authorList>
    </citation>
    <scope>FUNCTION</scope>
</reference>
<reference key="9">
    <citation type="journal article" date="2002" name="Genetics">
        <title>The Drosophila inebriated-encoded neurotransmitter/osmolyte transporter: dual roles in the control of neuronal excitability and the osmotic stress response.</title>
        <authorList>
            <person name="Huang X."/>
            <person name="Huang Y."/>
            <person name="Chinnappan R."/>
            <person name="Bocchini C."/>
            <person name="Gustin M.C."/>
            <person name="Stern M."/>
        </authorList>
    </citation>
    <scope>FUNCTION</scope>
    <scope>TISSUE SPECIFICITY</scope>
</reference>
<reference key="10">
    <citation type="journal article" date="2002" name="J. Neurosci.">
        <title>In vivo properties of the Drosophila inebriated-encoded neurotransmitter transporter.</title>
        <authorList>
            <person name="Huang Y."/>
            <person name="Stern M."/>
        </authorList>
    </citation>
    <scope>FUNCTION</scope>
    <scope>TISSUE SPECIFICITY</scope>
</reference>
<reference key="11">
    <citation type="journal article" date="2007" name="Glycobiology">
        <title>Identification of N-glycosylated proteins from the central nervous system of Drosophila melanogaster.</title>
        <authorList>
            <person name="Koles K."/>
            <person name="Lim J.-M."/>
            <person name="Aoki K."/>
            <person name="Porterfield M."/>
            <person name="Tiemeyer M."/>
            <person name="Wells L."/>
            <person name="Panin V."/>
        </authorList>
    </citation>
    <scope>GLYCOSYLATION [LARGE SCALE ANALYSIS] AT ASN-476</scope>
    <scope>IDENTIFICATION BY MASS SPECTROMETRY</scope>
    <source>
        <strain>Oregon-R</strain>
        <tissue>Head</tissue>
    </source>
</reference>
<proteinExistence type="evidence at protein level"/>
<sequence length="943" mass="103636">MAENKDVSQVLNTTPDQVVINRAPPTGLAPLRHSQLSDSGAESCYEGDEQARLIRSSSSRAHKFIIIPATPGTPPGSGAVAGPLPFRQTSSTTSLAAMAAALHKQSPLRHTSVRTRPSSEVLQPGQVLANQPTAAVSTSTVTFTIDDCNEEGDAIPAAASVPAPVTMPAISPTPATLTCTTTTTMAGDSVAVSPLSMELKSRLGSHHSSMRSVVSGYLPGLSDSSGNLVGGVSMATSGLQAPNPLYMQPQASLSGSSYHFHELAGNQIYSDVTSVRSLASIGIGSTDGRKLVIRRVPTTANELFDMVNPQTPPPLGVDDDDSYLDMSDETAQLKPRQQHWANKMQFVLACIGYSVGLGNVWRFPYMCYKSGGGVFLVPYCIILFICSIPLLFMELSVGQYTGRGPIGALGQLCPLFKGAGLASVVVSFLMSTYYSVIIGYSIYYFFTSFKTEMPWIDCNNRWNTPDCWVPQRKGINASAPDTSRTPSEEFFENKVLQISGGLEYPGMMRWELFACLICAWLMVYFATWKSIKSSAKVRYFTATFPFVLIIILMVRAVTLDGAAEGLRFFFRPKWSELKNANVWINAASQNFNSLGITFGSMISFASYNKYNNNILRDTVAVSAVNMITSLLVGIFAFSTLGNLALEQNTNVRDVIGDGPGMIFVVYPQAMAKMPYAQLWAVMFFFMLLCLGLNSQFAIVEVVVTSIQDGFPRWIKRHLGYHEIVVLFVCVISCLFGMPNIIQGGIYYFQLMDHYAASVTIMFLAFCQMIAIAWFYGTGRLSKNVKQMTGKAPSFYLRSCWLVLGPCLLFAIWVLSLINYHEPTYHNGRYTYPDWAYGIGWMFASFSLICIPGYAVINFLRSSGDTFWERIRNTLRPNIYECKICGEHHCEHDYPEQEQFMLAQEMATVYKPTNPHLLNLGQKCGYNAMQASPSHAEAGGPCGQ</sequence>
<dbReference type="EMBL" id="Y08362">
    <property type="protein sequence ID" value="CAA69649.1"/>
    <property type="molecule type" value="mRNA"/>
</dbReference>
<dbReference type="EMBL" id="U66460">
    <property type="protein sequence ID" value="AAC47292.1"/>
    <property type="molecule type" value="mRNA"/>
</dbReference>
<dbReference type="EMBL" id="AE014134">
    <property type="protein sequence ID" value="AAF51001.1"/>
    <property type="molecule type" value="Genomic_DNA"/>
</dbReference>
<dbReference type="EMBL" id="AE014134">
    <property type="protein sequence ID" value="AAN10349.1"/>
    <property type="molecule type" value="Genomic_DNA"/>
</dbReference>
<dbReference type="EMBL" id="AE014134">
    <property type="protein sequence ID" value="AAO41159.1"/>
    <property type="molecule type" value="Genomic_DNA"/>
</dbReference>
<dbReference type="EMBL" id="AE014134">
    <property type="protein sequence ID" value="AAO41160.1"/>
    <property type="molecule type" value="Genomic_DNA"/>
</dbReference>
<dbReference type="EMBL" id="AY128432">
    <property type="protein sequence ID" value="AAM75025.1"/>
    <property type="molecule type" value="mRNA"/>
</dbReference>
<dbReference type="EMBL" id="BT009955">
    <property type="protein sequence ID" value="AAQ22424.1"/>
    <property type="molecule type" value="mRNA"/>
</dbReference>
<dbReference type="RefSeq" id="NP_001162871.1">
    <molecule id="Q9VR07-1"/>
    <property type="nucleotide sequence ID" value="NM_001169400.2"/>
</dbReference>
<dbReference type="RefSeq" id="NP_477012.1">
    <molecule id="Q9VR07-1"/>
    <property type="nucleotide sequence ID" value="NM_057664.6"/>
</dbReference>
<dbReference type="RefSeq" id="NP_477013.1">
    <molecule id="Q9VR07-2"/>
    <property type="nucleotide sequence ID" value="NM_057665.5"/>
</dbReference>
<dbReference type="RefSeq" id="NP_787972.1">
    <molecule id="Q9VR07-1"/>
    <property type="nucleotide sequence ID" value="NM_175958.3"/>
</dbReference>
<dbReference type="RefSeq" id="NP_787973.1">
    <molecule id="Q9VR07-1"/>
    <property type="nucleotide sequence ID" value="NM_175959.3"/>
</dbReference>
<dbReference type="SMR" id="Q9VR07"/>
<dbReference type="BioGRID" id="59853">
    <property type="interactions" value="4"/>
</dbReference>
<dbReference type="FunCoup" id="Q9VR07">
    <property type="interactions" value="20"/>
</dbReference>
<dbReference type="IntAct" id="Q9VR07">
    <property type="interactions" value="2"/>
</dbReference>
<dbReference type="STRING" id="7227.FBpp0077136"/>
<dbReference type="TCDB" id="2.A.22.3.12">
    <property type="family name" value="the neurotransmitter:sodium symporter (nss) family"/>
</dbReference>
<dbReference type="GlyCosmos" id="Q9VR07">
    <property type="glycosylation" value="1 site, No reported glycans"/>
</dbReference>
<dbReference type="GlyGen" id="Q9VR07">
    <property type="glycosylation" value="3 sites, 1 O-linked glycan (1 site)"/>
</dbReference>
<dbReference type="iPTMnet" id="Q9VR07"/>
<dbReference type="PaxDb" id="7227-FBpp0077136"/>
<dbReference type="DNASU" id="33659"/>
<dbReference type="EnsemblMetazoa" id="FBtr0077446">
    <molecule id="Q9VR07-1"/>
    <property type="protein sequence ID" value="FBpp0077136"/>
    <property type="gene ID" value="FBgn0011603"/>
</dbReference>
<dbReference type="EnsemblMetazoa" id="FBtr0077447">
    <molecule id="Q9VR07-2"/>
    <property type="protein sequence ID" value="FBpp0077137"/>
    <property type="gene ID" value="FBgn0011603"/>
</dbReference>
<dbReference type="EnsemblMetazoa" id="FBtr0077448">
    <molecule id="Q9VR07-1"/>
    <property type="protein sequence ID" value="FBpp0077138"/>
    <property type="gene ID" value="FBgn0011603"/>
</dbReference>
<dbReference type="EnsemblMetazoa" id="FBtr0301407">
    <molecule id="Q9VR07-1"/>
    <property type="protein sequence ID" value="FBpp0290621"/>
    <property type="gene ID" value="FBgn0011603"/>
</dbReference>
<dbReference type="EnsemblMetazoa" id="FBtr0301408">
    <molecule id="Q9VR07-1"/>
    <property type="protein sequence ID" value="FBpp0290622"/>
    <property type="gene ID" value="FBgn0011603"/>
</dbReference>
<dbReference type="GeneID" id="33659"/>
<dbReference type="KEGG" id="dme:Dmel_CG15444"/>
<dbReference type="UCSC" id="CG15444-RA">
    <property type="organism name" value="d. melanogaster"/>
</dbReference>
<dbReference type="AGR" id="FB:FBgn0011603"/>
<dbReference type="CTD" id="33659"/>
<dbReference type="FlyBase" id="FBgn0011603">
    <property type="gene designation" value="ine"/>
</dbReference>
<dbReference type="VEuPathDB" id="VectorBase:FBgn0011603"/>
<dbReference type="eggNOG" id="KOG3660">
    <property type="taxonomic scope" value="Eukaryota"/>
</dbReference>
<dbReference type="GeneTree" id="ENSGT00900000141735"/>
<dbReference type="HOGENOM" id="CLU_006855_1_0_1"/>
<dbReference type="InParanoid" id="Q9VR07"/>
<dbReference type="OMA" id="SKMPYYE"/>
<dbReference type="OrthoDB" id="6581954at2759"/>
<dbReference type="PhylomeDB" id="Q9VR07"/>
<dbReference type="BioGRID-ORCS" id="33659">
    <property type="hits" value="0 hits in 1 CRISPR screen"/>
</dbReference>
<dbReference type="GenomeRNAi" id="33659"/>
<dbReference type="PRO" id="PR:Q9VR07"/>
<dbReference type="Proteomes" id="UP000000803">
    <property type="component" value="Chromosome 2L"/>
</dbReference>
<dbReference type="Bgee" id="FBgn0011603">
    <property type="expression patterns" value="Expressed in adult hindgut (Drosophila) and 96 other cell types or tissues"/>
</dbReference>
<dbReference type="ExpressionAtlas" id="Q9VR07">
    <property type="expression patterns" value="baseline and differential"/>
</dbReference>
<dbReference type="GO" id="GO:0016323">
    <property type="term" value="C:basolateral plasma membrane"/>
    <property type="evidence" value="ECO:0000314"/>
    <property type="project" value="FlyBase"/>
</dbReference>
<dbReference type="GO" id="GO:0016020">
    <property type="term" value="C:membrane"/>
    <property type="evidence" value="ECO:0000255"/>
    <property type="project" value="FlyBase"/>
</dbReference>
<dbReference type="GO" id="GO:0005886">
    <property type="term" value="C:plasma membrane"/>
    <property type="evidence" value="ECO:0000250"/>
    <property type="project" value="FlyBase"/>
</dbReference>
<dbReference type="GO" id="GO:0005283">
    <property type="term" value="F:amino acid:sodium symporter activity"/>
    <property type="evidence" value="ECO:0000318"/>
    <property type="project" value="GO_Central"/>
</dbReference>
<dbReference type="GO" id="GO:0005328">
    <property type="term" value="F:neurotransmitter:sodium symporter activity"/>
    <property type="evidence" value="ECO:0000250"/>
    <property type="project" value="FlyBase"/>
</dbReference>
<dbReference type="GO" id="GO:0005034">
    <property type="term" value="F:osmosensor activity"/>
    <property type="evidence" value="ECO:0000315"/>
    <property type="project" value="UniProtKB"/>
</dbReference>
<dbReference type="GO" id="GO:0042065">
    <property type="term" value="P:glial cell growth"/>
    <property type="evidence" value="ECO:0000315"/>
    <property type="project" value="UniProtKB"/>
</dbReference>
<dbReference type="GO" id="GO:1903804">
    <property type="term" value="P:glycine import across plasma membrane"/>
    <property type="evidence" value="ECO:0000318"/>
    <property type="project" value="GO_Central"/>
</dbReference>
<dbReference type="GO" id="GO:0050891">
    <property type="term" value="P:multicellular organismal-level water homeostasis"/>
    <property type="evidence" value="ECO:0000315"/>
    <property type="project" value="FlyBase"/>
</dbReference>
<dbReference type="GO" id="GO:0006836">
    <property type="term" value="P:neurotransmitter transport"/>
    <property type="evidence" value="ECO:0000255"/>
    <property type="project" value="FlyBase"/>
</dbReference>
<dbReference type="GO" id="GO:0042066">
    <property type="term" value="P:perineurial glial growth"/>
    <property type="evidence" value="ECO:0000316"/>
    <property type="project" value="FlyBase"/>
</dbReference>
<dbReference type="GO" id="GO:0047484">
    <property type="term" value="P:regulation of response to osmotic stress"/>
    <property type="evidence" value="ECO:0000315"/>
    <property type="project" value="UniProtKB"/>
</dbReference>
<dbReference type="GO" id="GO:0009414">
    <property type="term" value="P:response to water deprivation"/>
    <property type="evidence" value="ECO:0000315"/>
    <property type="project" value="FlyBase"/>
</dbReference>
<dbReference type="GO" id="GO:0035725">
    <property type="term" value="P:sodium ion transmembrane transport"/>
    <property type="evidence" value="ECO:0000318"/>
    <property type="project" value="GO_Central"/>
</dbReference>
<dbReference type="GO" id="GO:0019226">
    <property type="term" value="P:transmission of nerve impulse"/>
    <property type="evidence" value="ECO:0000315"/>
    <property type="project" value="UniProtKB"/>
</dbReference>
<dbReference type="InterPro" id="IPR000175">
    <property type="entry name" value="Na/ntran_symport"/>
</dbReference>
<dbReference type="InterPro" id="IPR002944">
    <property type="entry name" value="Na/ntran_symport_inebriated"/>
</dbReference>
<dbReference type="InterPro" id="IPR037272">
    <property type="entry name" value="SNS_sf"/>
</dbReference>
<dbReference type="NCBIfam" id="NF037979">
    <property type="entry name" value="Na_transp"/>
    <property type="match status" value="1"/>
</dbReference>
<dbReference type="PANTHER" id="PTHR11616:SF303">
    <property type="entry name" value="SODIUM- AND CHLORIDE-DEPENDENT GABA TRANSPORTER INE"/>
    <property type="match status" value="1"/>
</dbReference>
<dbReference type="PANTHER" id="PTHR11616">
    <property type="entry name" value="SODIUM/CHLORIDE DEPENDENT TRANSPORTER"/>
    <property type="match status" value="1"/>
</dbReference>
<dbReference type="Pfam" id="PF00209">
    <property type="entry name" value="SNF"/>
    <property type="match status" value="1"/>
</dbReference>
<dbReference type="PRINTS" id="PR01205">
    <property type="entry name" value="INEBRIATED"/>
</dbReference>
<dbReference type="PRINTS" id="PR00176">
    <property type="entry name" value="NANEUSMPORT"/>
</dbReference>
<dbReference type="SUPFAM" id="SSF161070">
    <property type="entry name" value="SNF-like"/>
    <property type="match status" value="1"/>
</dbReference>
<dbReference type="PROSITE" id="PS00610">
    <property type="entry name" value="NA_NEUROTRAN_SYMP_1"/>
    <property type="match status" value="1"/>
</dbReference>
<dbReference type="PROSITE" id="PS50267">
    <property type="entry name" value="NA_NEUROTRAN_SYMP_3"/>
    <property type="match status" value="1"/>
</dbReference>
<accession>Q9VR07</accession>
<accession>A4V056</accession>
<accession>O02003</accession>
<accession>Q94917</accession>
<protein>
    <recommendedName>
        <fullName>Sodium- and chloride-dependent GABA transporter ine</fullName>
    </recommendedName>
    <alternativeName>
        <fullName>Protein inebriated</fullName>
    </alternativeName>
    <alternativeName>
        <fullName>Protein receptor oscillation A</fullName>
    </alternativeName>
</protein>
<evidence type="ECO:0000255" key="1"/>
<evidence type="ECO:0000256" key="2">
    <source>
        <dbReference type="SAM" id="MobiDB-lite"/>
    </source>
</evidence>
<evidence type="ECO:0000269" key="3">
    <source>
    </source>
</evidence>
<evidence type="ECO:0000269" key="4">
    <source>
    </source>
</evidence>
<evidence type="ECO:0000269" key="5">
    <source>
    </source>
</evidence>
<evidence type="ECO:0000269" key="6">
    <source>
    </source>
</evidence>
<evidence type="ECO:0000269" key="7">
    <source>
    </source>
</evidence>
<evidence type="ECO:0000269" key="8">
    <source>
    </source>
</evidence>
<evidence type="ECO:0000269" key="9">
    <source>
    </source>
</evidence>
<evidence type="ECO:0000269" key="10">
    <source>
    </source>
</evidence>
<evidence type="ECO:0000269" key="11">
    <source>
    </source>
</evidence>
<evidence type="ECO:0000303" key="12">
    <source>
    </source>
</evidence>
<evidence type="ECO:0000303" key="13">
    <source>
    </source>
</evidence>
<evidence type="ECO:0000305" key="14"/>
<evidence type="ECO:0000312" key="15">
    <source>
        <dbReference type="EMBL" id="AAC47292.1"/>
    </source>
</evidence>
<evidence type="ECO:0000312" key="16">
    <source>
        <dbReference type="EMBL" id="AAF51001.1"/>
    </source>
</evidence>
<evidence type="ECO:0000312" key="17">
    <source>
        <dbReference type="EMBL" id="AAM75025.1"/>
    </source>
</evidence>
<evidence type="ECO:0000312" key="18">
    <source>
        <dbReference type="EMBL" id="AAQ22424.1"/>
    </source>
</evidence>
<evidence type="ECO:0000312" key="19">
    <source>
        <dbReference type="EMBL" id="CAA69649.1"/>
    </source>
</evidence>
<evidence type="ECO:0000312" key="20">
    <source>
        <dbReference type="FlyBase" id="FBgn0011603"/>
    </source>
</evidence>
<gene>
    <name evidence="20" type="primary">ine</name>
    <name evidence="19" type="synonym">rosA</name>
    <name type="ORF">CG15444</name>
</gene>
<feature type="chain" id="PRO_0000245793" description="Sodium- and chloride-dependent GABA transporter ine">
    <location>
        <begin position="1"/>
        <end position="943"/>
    </location>
</feature>
<feature type="topological domain" description="Cytoplasmic" evidence="1">
    <location>
        <begin position="1"/>
        <end position="345"/>
    </location>
</feature>
<feature type="transmembrane region" description="Helical; Name=1" evidence="1">
    <location>
        <begin position="346"/>
        <end position="366"/>
    </location>
</feature>
<feature type="transmembrane region" description="Helical; Name=2" evidence="1">
    <location>
        <begin position="373"/>
        <end position="393"/>
    </location>
</feature>
<feature type="transmembrane region" description="Helical; Name=3" evidence="1">
    <location>
        <begin position="418"/>
        <end position="438"/>
    </location>
</feature>
<feature type="topological domain" description="Extracellular" evidence="1">
    <location>
        <begin position="439"/>
        <end position="510"/>
    </location>
</feature>
<feature type="transmembrane region" description="Helical; Name=4" evidence="1">
    <location>
        <begin position="511"/>
        <end position="531"/>
    </location>
</feature>
<feature type="transmembrane region" description="Helical; Name=5" evidence="1">
    <location>
        <begin position="539"/>
        <end position="559"/>
    </location>
</feature>
<feature type="transmembrane region" description="Helical; Name=6" evidence="1">
    <location>
        <begin position="591"/>
        <end position="607"/>
    </location>
</feature>
<feature type="transmembrane region" description="Helical; Name=7" evidence="1">
    <location>
        <begin position="618"/>
        <end position="638"/>
    </location>
</feature>
<feature type="transmembrane region" description="Helical; Name=8" evidence="1">
    <location>
        <begin position="679"/>
        <end position="699"/>
    </location>
</feature>
<feature type="transmembrane region" description="Helical; Name=9" evidence="1">
    <location>
        <begin position="723"/>
        <end position="743"/>
    </location>
</feature>
<feature type="transmembrane region" description="Helical; Name=10" evidence="1">
    <location>
        <begin position="754"/>
        <end position="774"/>
    </location>
</feature>
<feature type="transmembrane region" description="Helical; Name=11" evidence="1">
    <location>
        <begin position="799"/>
        <end position="819"/>
    </location>
</feature>
<feature type="transmembrane region" description="Helical; Name=12" evidence="1">
    <location>
        <begin position="836"/>
        <end position="856"/>
    </location>
</feature>
<feature type="topological domain" description="Cytoplasmic" evidence="1">
    <location>
        <begin position="857"/>
        <end position="943"/>
    </location>
</feature>
<feature type="region of interest" description="Disordered" evidence="2">
    <location>
        <begin position="103"/>
        <end position="122"/>
    </location>
</feature>
<feature type="glycosylation site" description="N-linked (GlcNAc...) asparagine" evidence="10">
    <location>
        <position position="476"/>
    </location>
</feature>
<feature type="splice variant" id="VSP_052087" description="In isoform B." evidence="12 13">
    <original>AENKDVSQVLNTTPDQVVINRAPPTGL</original>
    <variation>PNRQDYDAQSSKHSEQSFFRFNRVAKV</variation>
    <location>
        <begin position="2"/>
        <end position="28"/>
    </location>
</feature>
<feature type="splice variant" id="VSP_052088" description="In isoform B." evidence="12 13">
    <location>
        <begin position="29"/>
        <end position="313"/>
    </location>
</feature>
<feature type="sequence conflict" description="In Ref. 1; AAC47292." evidence="14" ref="1">
    <original>E</original>
    <variation>D</variation>
    <location>
        <position position="3"/>
    </location>
</feature>
<feature type="sequence conflict" description="In Ref. 1; AAC47292." evidence="14" ref="1">
    <original>V</original>
    <variation>A</variation>
    <location>
        <position position="7"/>
    </location>
</feature>
<feature type="sequence conflict" description="In Ref. 1; AAC47292." evidence="14" ref="1">
    <original>V</original>
    <variation>I</variation>
    <location>
        <position position="80"/>
    </location>
</feature>
<feature type="sequence conflict" description="In Ref. 1; AAC47292." evidence="14" ref="1">
    <original>H</original>
    <variation>Q</variation>
    <location>
        <position position="110"/>
    </location>
</feature>
<name>INE_DROME</name>
<keyword id="KW-0025">Alternative splicing</keyword>
<keyword id="KW-0217">Developmental protein</keyword>
<keyword id="KW-0221">Differentiation</keyword>
<keyword id="KW-0325">Glycoprotein</keyword>
<keyword id="KW-0472">Membrane</keyword>
<keyword id="KW-0524">Neurogenesis</keyword>
<keyword id="KW-0532">Neurotransmitter transport</keyword>
<keyword id="KW-1185">Reference proteome</keyword>
<keyword id="KW-0769">Symport</keyword>
<keyword id="KW-0812">Transmembrane</keyword>
<keyword id="KW-1133">Transmembrane helix</keyword>
<keyword id="KW-0813">Transport</keyword>